<feature type="chain" id="PRO_0000354493" description="Large ribosomal subunit protein uL22">
    <location>
        <begin position="1"/>
        <end position="176"/>
    </location>
</feature>
<feature type="region of interest" description="Disordered" evidence="2">
    <location>
        <begin position="113"/>
        <end position="176"/>
    </location>
</feature>
<feature type="compositionally biased region" description="Low complexity" evidence="2">
    <location>
        <begin position="136"/>
        <end position="152"/>
    </location>
</feature>
<feature type="compositionally biased region" description="Basic and acidic residues" evidence="2">
    <location>
        <begin position="159"/>
        <end position="176"/>
    </location>
</feature>
<evidence type="ECO:0000255" key="1">
    <source>
        <dbReference type="HAMAP-Rule" id="MF_01331"/>
    </source>
</evidence>
<evidence type="ECO:0000256" key="2">
    <source>
        <dbReference type="SAM" id="MobiDB-lite"/>
    </source>
</evidence>
<evidence type="ECO:0000305" key="3"/>
<keyword id="KW-0687">Ribonucleoprotein</keyword>
<keyword id="KW-0689">Ribosomal protein</keyword>
<keyword id="KW-0694">RNA-binding</keyword>
<keyword id="KW-0699">rRNA-binding</keyword>
<protein>
    <recommendedName>
        <fullName evidence="1">Large ribosomal subunit protein uL22</fullName>
    </recommendedName>
    <alternativeName>
        <fullName evidence="3">50S ribosomal protein L22</fullName>
    </alternativeName>
</protein>
<name>RL22_MYCUA</name>
<proteinExistence type="inferred from homology"/>
<sequence>MTTTTEFPSATAKARFVRVSPRKARRVIDLVRGRSVSDALDILRWAPQAASEPVAKVIASAAANAQNNNGLDPATLIVATVYADEGPTAKRIRPRAQGRAFRIRKRTSHITVVVESRPSKDQRSSKSSRARRAEGSKAAATAPAKKSSASKAPAKKAATKAESKTSEISEAKGGSD</sequence>
<gene>
    <name evidence="1" type="primary">rplV</name>
    <name type="ordered locus">MUL_0795</name>
</gene>
<accession>A0PM68</accession>
<dbReference type="EMBL" id="CP000325">
    <property type="protein sequence ID" value="ABL03437.1"/>
    <property type="molecule type" value="Genomic_DNA"/>
</dbReference>
<dbReference type="RefSeq" id="WP_011739062.1">
    <property type="nucleotide sequence ID" value="NC_008611.1"/>
</dbReference>
<dbReference type="SMR" id="A0PM68"/>
<dbReference type="KEGG" id="mul:MUL_0795"/>
<dbReference type="eggNOG" id="COG0091">
    <property type="taxonomic scope" value="Bacteria"/>
</dbReference>
<dbReference type="HOGENOM" id="CLU_083987_1_0_11"/>
<dbReference type="Proteomes" id="UP000000765">
    <property type="component" value="Chromosome"/>
</dbReference>
<dbReference type="GO" id="GO:0022625">
    <property type="term" value="C:cytosolic large ribosomal subunit"/>
    <property type="evidence" value="ECO:0007669"/>
    <property type="project" value="TreeGrafter"/>
</dbReference>
<dbReference type="GO" id="GO:0019843">
    <property type="term" value="F:rRNA binding"/>
    <property type="evidence" value="ECO:0007669"/>
    <property type="project" value="UniProtKB-UniRule"/>
</dbReference>
<dbReference type="GO" id="GO:0003735">
    <property type="term" value="F:structural constituent of ribosome"/>
    <property type="evidence" value="ECO:0007669"/>
    <property type="project" value="InterPro"/>
</dbReference>
<dbReference type="GO" id="GO:0006412">
    <property type="term" value="P:translation"/>
    <property type="evidence" value="ECO:0007669"/>
    <property type="project" value="UniProtKB-UniRule"/>
</dbReference>
<dbReference type="CDD" id="cd00336">
    <property type="entry name" value="Ribosomal_L22"/>
    <property type="match status" value="1"/>
</dbReference>
<dbReference type="FunFam" id="3.90.470.10:FF:000002">
    <property type="entry name" value="50S ribosomal protein L22"/>
    <property type="match status" value="1"/>
</dbReference>
<dbReference type="Gene3D" id="3.90.470.10">
    <property type="entry name" value="Ribosomal protein L22/L17"/>
    <property type="match status" value="1"/>
</dbReference>
<dbReference type="HAMAP" id="MF_01331_B">
    <property type="entry name" value="Ribosomal_uL22_B"/>
    <property type="match status" value="1"/>
</dbReference>
<dbReference type="InterPro" id="IPR001063">
    <property type="entry name" value="Ribosomal_uL22"/>
</dbReference>
<dbReference type="InterPro" id="IPR005727">
    <property type="entry name" value="Ribosomal_uL22_bac/chlpt-type"/>
</dbReference>
<dbReference type="InterPro" id="IPR047867">
    <property type="entry name" value="Ribosomal_uL22_bac/org-type"/>
</dbReference>
<dbReference type="InterPro" id="IPR018260">
    <property type="entry name" value="Ribosomal_uL22_CS"/>
</dbReference>
<dbReference type="InterPro" id="IPR036394">
    <property type="entry name" value="Ribosomal_uL22_sf"/>
</dbReference>
<dbReference type="NCBIfam" id="TIGR01044">
    <property type="entry name" value="rplV_bact"/>
    <property type="match status" value="1"/>
</dbReference>
<dbReference type="PANTHER" id="PTHR13501">
    <property type="entry name" value="CHLOROPLAST 50S RIBOSOMAL PROTEIN L22-RELATED"/>
    <property type="match status" value="1"/>
</dbReference>
<dbReference type="PANTHER" id="PTHR13501:SF8">
    <property type="entry name" value="LARGE RIBOSOMAL SUBUNIT PROTEIN UL22M"/>
    <property type="match status" value="1"/>
</dbReference>
<dbReference type="Pfam" id="PF00237">
    <property type="entry name" value="Ribosomal_L22"/>
    <property type="match status" value="1"/>
</dbReference>
<dbReference type="SUPFAM" id="SSF54843">
    <property type="entry name" value="Ribosomal protein L22"/>
    <property type="match status" value="1"/>
</dbReference>
<dbReference type="PROSITE" id="PS00464">
    <property type="entry name" value="RIBOSOMAL_L22"/>
    <property type="match status" value="1"/>
</dbReference>
<reference key="1">
    <citation type="journal article" date="2007" name="Genome Res.">
        <title>Reductive evolution and niche adaptation inferred from the genome of Mycobacterium ulcerans, the causative agent of Buruli ulcer.</title>
        <authorList>
            <person name="Stinear T.P."/>
            <person name="Seemann T."/>
            <person name="Pidot S."/>
            <person name="Frigui W."/>
            <person name="Reysset G."/>
            <person name="Garnier T."/>
            <person name="Meurice G."/>
            <person name="Simon D."/>
            <person name="Bouchier C."/>
            <person name="Ma L."/>
            <person name="Tichit M."/>
            <person name="Porter J.L."/>
            <person name="Ryan J."/>
            <person name="Johnson P.D.R."/>
            <person name="Davies J.K."/>
            <person name="Jenkin G.A."/>
            <person name="Small P.L.C."/>
            <person name="Jones L.M."/>
            <person name="Tekaia F."/>
            <person name="Laval F."/>
            <person name="Daffe M."/>
            <person name="Parkhill J."/>
            <person name="Cole S.T."/>
        </authorList>
    </citation>
    <scope>NUCLEOTIDE SEQUENCE [LARGE SCALE GENOMIC DNA]</scope>
    <source>
        <strain>Agy99</strain>
    </source>
</reference>
<comment type="function">
    <text evidence="1">This protein binds specifically to 23S rRNA; its binding is stimulated by other ribosomal proteins, e.g. L4, L17, and L20. It is important during the early stages of 50S assembly. It makes multiple contacts with different domains of the 23S rRNA in the assembled 50S subunit and ribosome (By similarity).</text>
</comment>
<comment type="function">
    <text evidence="1">The globular domain of the protein is located near the polypeptide exit tunnel on the outside of the subunit, while an extended beta-hairpin is found that lines the wall of the exit tunnel in the center of the 70S ribosome.</text>
</comment>
<comment type="subunit">
    <text evidence="1">Part of the 50S ribosomal subunit.</text>
</comment>
<comment type="similarity">
    <text evidence="1">Belongs to the universal ribosomal protein uL22 family.</text>
</comment>
<organism>
    <name type="scientific">Mycobacterium ulcerans (strain Agy99)</name>
    <dbReference type="NCBI Taxonomy" id="362242"/>
    <lineage>
        <taxon>Bacteria</taxon>
        <taxon>Bacillati</taxon>
        <taxon>Actinomycetota</taxon>
        <taxon>Actinomycetes</taxon>
        <taxon>Mycobacteriales</taxon>
        <taxon>Mycobacteriaceae</taxon>
        <taxon>Mycobacterium</taxon>
        <taxon>Mycobacterium ulcerans group</taxon>
    </lineage>
</organism>